<sequence>MVSISKSLVADICVGSSPPTVRFVTLLENHDISNTTFPSLSGVLAQYGSSLQGPAGLQHVGLAQDQKYQHALTKGLKAVEKLQHFLDGPAPMSGDPVVLRCSSARSSTLLEITDETITSGPPCAGAAREREGITSFHRMKFHLPKHVGCVQDVHETSSQMLHLSCDGLRSEDTLFDRFGRWSRDHVTIVSGMCLFSDKIMRDAVQGDGKLDVSKLSSQEPTLYELEIIARSSSAIADVASHILGKNGAAKPIPLEIVLDAPSWHYFQVVHGNLASGHCTPAEALDWLQAVELRCEQVTTVFENSVRHEMGLRGVPAGFYHILAAPGTAGVGTSIRQALTSGMVPDIADCMDAICEVEGERWAMFYSLIPEKDRPCDFRSLGNLFYIYEVVRPALAAKNGSTAAELEVSGPNSALDDSSSSGHSDILDSALHLKANVERPLIMSIDDRAERKIYSKAQAFIKKIRRAPQIPSHPLLLELYSARRVFINGNTGGDSLYWNDSSPHPLRMNTTAGSPELEAFGVIRNLYGNDCAQNLQRWFSEAGVNVSGHT</sequence>
<organism>
    <name type="scientific">Apiospora montagnei</name>
    <name type="common">Sphaeria apiospora</name>
    <dbReference type="NCBI Taxonomy" id="255776"/>
    <lineage>
        <taxon>Eukaryota</taxon>
        <taxon>Fungi</taxon>
        <taxon>Dikarya</taxon>
        <taxon>Ascomycota</taxon>
        <taxon>Pezizomycotina</taxon>
        <taxon>Sordariomycetes</taxon>
        <taxon>Xylariomycetidae</taxon>
        <taxon>Amphisphaeriales</taxon>
        <taxon>Apiosporaceae</taxon>
        <taxon>Apiospora</taxon>
    </lineage>
</organism>
<accession>P9WEK1</accession>
<dbReference type="EC" id="6.3.2.-" evidence="2"/>
<dbReference type="EMBL" id="OP622864">
    <property type="protein sequence ID" value="WCB22923.1"/>
    <property type="molecule type" value="mRNA"/>
</dbReference>
<dbReference type="GO" id="GO:0016874">
    <property type="term" value="F:ligase activity"/>
    <property type="evidence" value="ECO:0007669"/>
    <property type="project" value="UniProtKB-KW"/>
</dbReference>
<name>AMAA_APIMO</name>
<protein>
    <recommendedName>
        <fullName evidence="3">Arginine-containing cyclodipeptide synthase amaA</fullName>
        <shortName evidence="3">RCDPS amaA</shortName>
        <ecNumber evidence="2">6.3.2.-</ecNumber>
    </recommendedName>
</protein>
<proteinExistence type="evidence at protein level"/>
<keyword id="KW-0436">Ligase</keyword>
<reference key="1">
    <citation type="journal article" date="2023" name="Nat. Chem. Biol.">
        <title>Genome mining for unknown-unknown natural products.</title>
        <authorList>
            <person name="Yee D.A."/>
            <person name="Niwa K."/>
            <person name="Perlatti B."/>
            <person name="Chen M."/>
            <person name="Li Y."/>
            <person name="Tang Y."/>
        </authorList>
    </citation>
    <scope>NUCLEOTIDE SEQUENCE [MRNA]</scope>
    <scope>FUNCTION</scope>
    <scope>CATALYTIC ACTIVITY</scope>
    <scope>PATHWAY</scope>
</reference>
<comment type="function">
    <text evidence="2 5">Arginine-containing cyclodipeptide synthase; part of the cluster that mediates the biosynthesis of a highly modified cyclo-arginine-proline dipeptide (cRP) (PubMed:36702957). Within the pathway, amaA acts as the scaffold-generating enzyme and is responsible for formation of the cyclo-Arg-Pro diketopiperazine (cRW) from L-arginyl-tRNA(Arg) + L-prolyl-tRNA(Pro) (PubMed:36702957). Additional enzymes from the cluster then further modify the cyclo-Arg-Pro diketopiperazine (cRW) scaffold (Probable).</text>
</comment>
<comment type="catalytic activity">
    <reaction evidence="2">
        <text>L-prolyl-tRNA(Pro) + L-arginyl-tRNA(Arg) = cyclo(L-arginyl-L-prolyl) + tRNA(Pro) + tRNA(Arg) + 2 H(+)</text>
        <dbReference type="Rhea" id="RHEA:80423"/>
        <dbReference type="Rhea" id="RHEA-COMP:9658"/>
        <dbReference type="Rhea" id="RHEA-COMP:9673"/>
        <dbReference type="Rhea" id="RHEA-COMP:9700"/>
        <dbReference type="Rhea" id="RHEA-COMP:9702"/>
        <dbReference type="ChEBI" id="CHEBI:15378"/>
        <dbReference type="ChEBI" id="CHEBI:78442"/>
        <dbReference type="ChEBI" id="CHEBI:78513"/>
        <dbReference type="ChEBI" id="CHEBI:78532"/>
        <dbReference type="ChEBI" id="CHEBI:231491"/>
    </reaction>
    <physiologicalReaction direction="left-to-right" evidence="2">
        <dbReference type="Rhea" id="RHEA:80424"/>
    </physiologicalReaction>
</comment>
<comment type="pathway">
    <text evidence="2">Secondary metabolite biosynthesis.</text>
</comment>
<comment type="domain">
    <text evidence="1">The conserved DDXXE motif is essential for catalytic activity.</text>
</comment>
<comment type="similarity">
    <text evidence="4">Belongs to the arginine-containing cyclodipeptide synthase family.</text>
</comment>
<evidence type="ECO:0000250" key="1">
    <source>
        <dbReference type="UniProtKB" id="P9WEJ7"/>
    </source>
</evidence>
<evidence type="ECO:0000269" key="2">
    <source>
    </source>
</evidence>
<evidence type="ECO:0000303" key="3">
    <source>
    </source>
</evidence>
<evidence type="ECO:0000305" key="4"/>
<evidence type="ECO:0000305" key="5">
    <source>
    </source>
</evidence>
<gene>
    <name evidence="3" type="primary">amaA</name>
</gene>
<feature type="chain" id="PRO_0000461005" description="Arginine-containing cyclodipeptide synthase amaA">
    <location>
        <begin position="1"/>
        <end position="549"/>
    </location>
</feature>
<feature type="short sequence motif" description="Conserved DDXXE motif" evidence="1">
    <location>
        <begin position="445"/>
        <end position="449"/>
    </location>
</feature>